<keyword id="KW-1185">Reference proteome</keyword>
<keyword id="KW-0687">Ribonucleoprotein</keyword>
<keyword id="KW-0689">Ribosomal protein</keyword>
<keyword id="KW-0694">RNA-binding</keyword>
<keyword id="KW-0699">rRNA-binding</keyword>
<keyword id="KW-0820">tRNA-binding</keyword>
<reference key="1">
    <citation type="journal article" date="2007" name="PLoS Genet.">
        <title>Patterns and implications of gene gain and loss in the evolution of Prochlorococcus.</title>
        <authorList>
            <person name="Kettler G.C."/>
            <person name="Martiny A.C."/>
            <person name="Huang K."/>
            <person name="Zucker J."/>
            <person name="Coleman M.L."/>
            <person name="Rodrigue S."/>
            <person name="Chen F."/>
            <person name="Lapidus A."/>
            <person name="Ferriera S."/>
            <person name="Johnson J."/>
            <person name="Steglich C."/>
            <person name="Church G.M."/>
            <person name="Richardson P."/>
            <person name="Chisholm S.W."/>
        </authorList>
    </citation>
    <scope>NUCLEOTIDE SEQUENCE [LARGE SCALE GENOMIC DNA]</scope>
    <source>
        <strain>MIT 9211</strain>
    </source>
</reference>
<accession>A9BCM6</accession>
<name>RS13_PROM4</name>
<evidence type="ECO:0000255" key="1">
    <source>
        <dbReference type="HAMAP-Rule" id="MF_01315"/>
    </source>
</evidence>
<evidence type="ECO:0000256" key="2">
    <source>
        <dbReference type="SAM" id="MobiDB-lite"/>
    </source>
</evidence>
<evidence type="ECO:0000305" key="3"/>
<gene>
    <name evidence="1" type="primary">rpsM</name>
    <name evidence="1" type="synonym">rps13</name>
    <name type="ordered locus">P9211_16571</name>
</gene>
<sequence>MARIAGIDIPREKRVEVALTYIYGVGLTRAKSILAKAGVNPDIRVKDLDDGDVQKLRTAVESFTLEGDLRRQEGMALKRLQDIGCLRGRRHRMSLPVRGQRTRTNARTRRGSRKTVAGRKK</sequence>
<dbReference type="EMBL" id="CP000878">
    <property type="protein sequence ID" value="ABX09588.1"/>
    <property type="molecule type" value="Genomic_DNA"/>
</dbReference>
<dbReference type="RefSeq" id="WP_012196209.1">
    <property type="nucleotide sequence ID" value="NC_009976.1"/>
</dbReference>
<dbReference type="SMR" id="A9BCM6"/>
<dbReference type="STRING" id="93059.P9211_16571"/>
<dbReference type="KEGG" id="pmj:P9211_16571"/>
<dbReference type="eggNOG" id="COG0099">
    <property type="taxonomic scope" value="Bacteria"/>
</dbReference>
<dbReference type="HOGENOM" id="CLU_103849_1_2_3"/>
<dbReference type="OrthoDB" id="9803610at2"/>
<dbReference type="Proteomes" id="UP000000788">
    <property type="component" value="Chromosome"/>
</dbReference>
<dbReference type="GO" id="GO:0005829">
    <property type="term" value="C:cytosol"/>
    <property type="evidence" value="ECO:0007669"/>
    <property type="project" value="TreeGrafter"/>
</dbReference>
<dbReference type="GO" id="GO:0015935">
    <property type="term" value="C:small ribosomal subunit"/>
    <property type="evidence" value="ECO:0007669"/>
    <property type="project" value="TreeGrafter"/>
</dbReference>
<dbReference type="GO" id="GO:0019843">
    <property type="term" value="F:rRNA binding"/>
    <property type="evidence" value="ECO:0007669"/>
    <property type="project" value="UniProtKB-UniRule"/>
</dbReference>
<dbReference type="GO" id="GO:0003735">
    <property type="term" value="F:structural constituent of ribosome"/>
    <property type="evidence" value="ECO:0007669"/>
    <property type="project" value="InterPro"/>
</dbReference>
<dbReference type="GO" id="GO:0000049">
    <property type="term" value="F:tRNA binding"/>
    <property type="evidence" value="ECO:0007669"/>
    <property type="project" value="UniProtKB-UniRule"/>
</dbReference>
<dbReference type="GO" id="GO:0006412">
    <property type="term" value="P:translation"/>
    <property type="evidence" value="ECO:0007669"/>
    <property type="project" value="UniProtKB-UniRule"/>
</dbReference>
<dbReference type="FunFam" id="1.10.8.50:FF:000001">
    <property type="entry name" value="30S ribosomal protein S13"/>
    <property type="match status" value="1"/>
</dbReference>
<dbReference type="Gene3D" id="1.10.8.50">
    <property type="match status" value="1"/>
</dbReference>
<dbReference type="Gene3D" id="4.10.910.10">
    <property type="entry name" value="30s ribosomal protein s13, domain 2"/>
    <property type="match status" value="1"/>
</dbReference>
<dbReference type="HAMAP" id="MF_01315">
    <property type="entry name" value="Ribosomal_uS13"/>
    <property type="match status" value="1"/>
</dbReference>
<dbReference type="InterPro" id="IPR027437">
    <property type="entry name" value="Rbsml_uS13_C"/>
</dbReference>
<dbReference type="InterPro" id="IPR001892">
    <property type="entry name" value="Ribosomal_uS13"/>
</dbReference>
<dbReference type="InterPro" id="IPR010979">
    <property type="entry name" value="Ribosomal_uS13-like_H2TH"/>
</dbReference>
<dbReference type="InterPro" id="IPR019980">
    <property type="entry name" value="Ribosomal_uS13_bac-type"/>
</dbReference>
<dbReference type="InterPro" id="IPR018269">
    <property type="entry name" value="Ribosomal_uS13_CS"/>
</dbReference>
<dbReference type="NCBIfam" id="TIGR03631">
    <property type="entry name" value="uS13_bact"/>
    <property type="match status" value="1"/>
</dbReference>
<dbReference type="PANTHER" id="PTHR10871">
    <property type="entry name" value="30S RIBOSOMAL PROTEIN S13/40S RIBOSOMAL PROTEIN S18"/>
    <property type="match status" value="1"/>
</dbReference>
<dbReference type="PANTHER" id="PTHR10871:SF1">
    <property type="entry name" value="SMALL RIBOSOMAL SUBUNIT PROTEIN US13M"/>
    <property type="match status" value="1"/>
</dbReference>
<dbReference type="Pfam" id="PF00416">
    <property type="entry name" value="Ribosomal_S13"/>
    <property type="match status" value="1"/>
</dbReference>
<dbReference type="PIRSF" id="PIRSF002134">
    <property type="entry name" value="Ribosomal_S13"/>
    <property type="match status" value="1"/>
</dbReference>
<dbReference type="SUPFAM" id="SSF46946">
    <property type="entry name" value="S13-like H2TH domain"/>
    <property type="match status" value="1"/>
</dbReference>
<dbReference type="PROSITE" id="PS00646">
    <property type="entry name" value="RIBOSOMAL_S13_1"/>
    <property type="match status" value="1"/>
</dbReference>
<dbReference type="PROSITE" id="PS50159">
    <property type="entry name" value="RIBOSOMAL_S13_2"/>
    <property type="match status" value="1"/>
</dbReference>
<proteinExistence type="inferred from homology"/>
<feature type="chain" id="PRO_1000141302" description="Small ribosomal subunit protein uS13">
    <location>
        <begin position="1"/>
        <end position="121"/>
    </location>
</feature>
<feature type="region of interest" description="Disordered" evidence="2">
    <location>
        <begin position="91"/>
        <end position="121"/>
    </location>
</feature>
<feature type="compositionally biased region" description="Basic residues" evidence="2">
    <location>
        <begin position="100"/>
        <end position="121"/>
    </location>
</feature>
<protein>
    <recommendedName>
        <fullName evidence="1">Small ribosomal subunit protein uS13</fullName>
    </recommendedName>
    <alternativeName>
        <fullName evidence="3">30S ribosomal protein S13</fullName>
    </alternativeName>
</protein>
<organism>
    <name type="scientific">Prochlorococcus marinus (strain MIT 9211)</name>
    <dbReference type="NCBI Taxonomy" id="93059"/>
    <lineage>
        <taxon>Bacteria</taxon>
        <taxon>Bacillati</taxon>
        <taxon>Cyanobacteriota</taxon>
        <taxon>Cyanophyceae</taxon>
        <taxon>Synechococcales</taxon>
        <taxon>Prochlorococcaceae</taxon>
        <taxon>Prochlorococcus</taxon>
    </lineage>
</organism>
<comment type="function">
    <text evidence="1">Located at the top of the head of the 30S subunit, it contacts several helices of the 16S rRNA. In the 70S ribosome it contacts the 23S rRNA (bridge B1a) and protein L5 of the 50S subunit (bridge B1b), connecting the 2 subunits; these bridges are implicated in subunit movement. Contacts the tRNAs in the A and P-sites.</text>
</comment>
<comment type="subunit">
    <text evidence="1">Part of the 30S ribosomal subunit. Forms a loose heterodimer with protein S19. Forms two bridges to the 50S subunit in the 70S ribosome.</text>
</comment>
<comment type="similarity">
    <text evidence="1">Belongs to the universal ribosomal protein uS13 family.</text>
</comment>